<reference key="1">
    <citation type="journal article" date="1992" name="J. Biol. Chem.">
        <title>NKD, a developmentally regulated tachykinin receptor in Drosophila.</title>
        <authorList>
            <person name="Monnier D."/>
            <person name="Colas J.-F."/>
            <person name="Rosay P."/>
            <person name="Hen R."/>
            <person name="Borrelli E."/>
            <person name="Maroteaux L."/>
        </authorList>
    </citation>
    <scope>NUCLEOTIDE SEQUENCE [MRNA]</scope>
    <scope>FUNCTION</scope>
    <scope>SUBCELLULAR LOCATION</scope>
    <scope>TISSUE SPECIFICITY</scope>
    <scope>DEVELOPMENTAL STAGE</scope>
    <source>
        <tissue>Head</tissue>
    </source>
</reference>
<reference key="2">
    <citation type="journal article" date="2000" name="Science">
        <title>The genome sequence of Drosophila melanogaster.</title>
        <authorList>
            <person name="Adams M.D."/>
            <person name="Celniker S.E."/>
            <person name="Holt R.A."/>
            <person name="Evans C.A."/>
            <person name="Gocayne J.D."/>
            <person name="Amanatides P.G."/>
            <person name="Scherer S.E."/>
            <person name="Li P.W."/>
            <person name="Hoskins R.A."/>
            <person name="Galle R.F."/>
            <person name="George R.A."/>
            <person name="Lewis S.E."/>
            <person name="Richards S."/>
            <person name="Ashburner M."/>
            <person name="Henderson S.N."/>
            <person name="Sutton G.G."/>
            <person name="Wortman J.R."/>
            <person name="Yandell M.D."/>
            <person name="Zhang Q."/>
            <person name="Chen L.X."/>
            <person name="Brandon R.C."/>
            <person name="Rogers Y.-H.C."/>
            <person name="Blazej R.G."/>
            <person name="Champe M."/>
            <person name="Pfeiffer B.D."/>
            <person name="Wan K.H."/>
            <person name="Doyle C."/>
            <person name="Baxter E.G."/>
            <person name="Helt G."/>
            <person name="Nelson C.R."/>
            <person name="Miklos G.L.G."/>
            <person name="Abril J.F."/>
            <person name="Agbayani A."/>
            <person name="An H.-J."/>
            <person name="Andrews-Pfannkoch C."/>
            <person name="Baldwin D."/>
            <person name="Ballew R.M."/>
            <person name="Basu A."/>
            <person name="Baxendale J."/>
            <person name="Bayraktaroglu L."/>
            <person name="Beasley E.M."/>
            <person name="Beeson K.Y."/>
            <person name="Benos P.V."/>
            <person name="Berman B.P."/>
            <person name="Bhandari D."/>
            <person name="Bolshakov S."/>
            <person name="Borkova D."/>
            <person name="Botchan M.R."/>
            <person name="Bouck J."/>
            <person name="Brokstein P."/>
            <person name="Brottier P."/>
            <person name="Burtis K.C."/>
            <person name="Busam D.A."/>
            <person name="Butler H."/>
            <person name="Cadieu E."/>
            <person name="Center A."/>
            <person name="Chandra I."/>
            <person name="Cherry J.M."/>
            <person name="Cawley S."/>
            <person name="Dahlke C."/>
            <person name="Davenport L.B."/>
            <person name="Davies P."/>
            <person name="de Pablos B."/>
            <person name="Delcher A."/>
            <person name="Deng Z."/>
            <person name="Mays A.D."/>
            <person name="Dew I."/>
            <person name="Dietz S.M."/>
            <person name="Dodson K."/>
            <person name="Doup L.E."/>
            <person name="Downes M."/>
            <person name="Dugan-Rocha S."/>
            <person name="Dunkov B.C."/>
            <person name="Dunn P."/>
            <person name="Durbin K.J."/>
            <person name="Evangelista C.C."/>
            <person name="Ferraz C."/>
            <person name="Ferriera S."/>
            <person name="Fleischmann W."/>
            <person name="Fosler C."/>
            <person name="Gabrielian A.E."/>
            <person name="Garg N.S."/>
            <person name="Gelbart W.M."/>
            <person name="Glasser K."/>
            <person name="Glodek A."/>
            <person name="Gong F."/>
            <person name="Gorrell J.H."/>
            <person name="Gu Z."/>
            <person name="Guan P."/>
            <person name="Harris M."/>
            <person name="Harris N.L."/>
            <person name="Harvey D.A."/>
            <person name="Heiman T.J."/>
            <person name="Hernandez J.R."/>
            <person name="Houck J."/>
            <person name="Hostin D."/>
            <person name="Houston K.A."/>
            <person name="Howland T.J."/>
            <person name="Wei M.-H."/>
            <person name="Ibegwam C."/>
            <person name="Jalali M."/>
            <person name="Kalush F."/>
            <person name="Karpen G.H."/>
            <person name="Ke Z."/>
            <person name="Kennison J.A."/>
            <person name="Ketchum K.A."/>
            <person name="Kimmel B.E."/>
            <person name="Kodira C.D."/>
            <person name="Kraft C.L."/>
            <person name="Kravitz S."/>
            <person name="Kulp D."/>
            <person name="Lai Z."/>
            <person name="Lasko P."/>
            <person name="Lei Y."/>
            <person name="Levitsky A.A."/>
            <person name="Li J.H."/>
            <person name="Li Z."/>
            <person name="Liang Y."/>
            <person name="Lin X."/>
            <person name="Liu X."/>
            <person name="Mattei B."/>
            <person name="McIntosh T.C."/>
            <person name="McLeod M.P."/>
            <person name="McPherson D."/>
            <person name="Merkulov G."/>
            <person name="Milshina N.V."/>
            <person name="Mobarry C."/>
            <person name="Morris J."/>
            <person name="Moshrefi A."/>
            <person name="Mount S.M."/>
            <person name="Moy M."/>
            <person name="Murphy B."/>
            <person name="Murphy L."/>
            <person name="Muzny D.M."/>
            <person name="Nelson D.L."/>
            <person name="Nelson D.R."/>
            <person name="Nelson K.A."/>
            <person name="Nixon K."/>
            <person name="Nusskern D.R."/>
            <person name="Pacleb J.M."/>
            <person name="Palazzolo M."/>
            <person name="Pittman G.S."/>
            <person name="Pan S."/>
            <person name="Pollard J."/>
            <person name="Puri V."/>
            <person name="Reese M.G."/>
            <person name="Reinert K."/>
            <person name="Remington K."/>
            <person name="Saunders R.D.C."/>
            <person name="Scheeler F."/>
            <person name="Shen H."/>
            <person name="Shue B.C."/>
            <person name="Siden-Kiamos I."/>
            <person name="Simpson M."/>
            <person name="Skupski M.P."/>
            <person name="Smith T.J."/>
            <person name="Spier E."/>
            <person name="Spradling A.C."/>
            <person name="Stapleton M."/>
            <person name="Strong R."/>
            <person name="Sun E."/>
            <person name="Svirskas R."/>
            <person name="Tector C."/>
            <person name="Turner R."/>
            <person name="Venter E."/>
            <person name="Wang A.H."/>
            <person name="Wang X."/>
            <person name="Wang Z.-Y."/>
            <person name="Wassarman D.A."/>
            <person name="Weinstock G.M."/>
            <person name="Weissenbach J."/>
            <person name="Williams S.M."/>
            <person name="Woodage T."/>
            <person name="Worley K.C."/>
            <person name="Wu D."/>
            <person name="Yang S."/>
            <person name="Yao Q.A."/>
            <person name="Ye J."/>
            <person name="Yeh R.-F."/>
            <person name="Zaveri J.S."/>
            <person name="Zhan M."/>
            <person name="Zhang G."/>
            <person name="Zhao Q."/>
            <person name="Zheng L."/>
            <person name="Zheng X.H."/>
            <person name="Zhong F.N."/>
            <person name="Zhong W."/>
            <person name="Zhou X."/>
            <person name="Zhu S.C."/>
            <person name="Zhu X."/>
            <person name="Smith H.O."/>
            <person name="Gibbs R.A."/>
            <person name="Myers E.W."/>
            <person name="Rubin G.M."/>
            <person name="Venter J.C."/>
        </authorList>
    </citation>
    <scope>NUCLEOTIDE SEQUENCE [LARGE SCALE GENOMIC DNA]</scope>
    <source>
        <strain>Berkeley</strain>
    </source>
</reference>
<reference key="3">
    <citation type="journal article" date="2002" name="Genome Biol.">
        <title>Annotation of the Drosophila melanogaster euchromatic genome: a systematic review.</title>
        <authorList>
            <person name="Misra S."/>
            <person name="Crosby M.A."/>
            <person name="Mungall C.J."/>
            <person name="Matthews B.B."/>
            <person name="Campbell K.S."/>
            <person name="Hradecky P."/>
            <person name="Huang Y."/>
            <person name="Kaminker J.S."/>
            <person name="Millburn G.H."/>
            <person name="Prochnik S.E."/>
            <person name="Smith C.D."/>
            <person name="Tupy J.L."/>
            <person name="Whitfield E.J."/>
            <person name="Bayraktaroglu L."/>
            <person name="Berman B.P."/>
            <person name="Bettencourt B.R."/>
            <person name="Celniker S.E."/>
            <person name="de Grey A.D.N.J."/>
            <person name="Drysdale R.A."/>
            <person name="Harris N.L."/>
            <person name="Richter J."/>
            <person name="Russo S."/>
            <person name="Schroeder A.J."/>
            <person name="Shu S.Q."/>
            <person name="Stapleton M."/>
            <person name="Yamada C."/>
            <person name="Ashburner M."/>
            <person name="Gelbart W.M."/>
            <person name="Rubin G.M."/>
            <person name="Lewis S.E."/>
        </authorList>
    </citation>
    <scope>GENOME REANNOTATION</scope>
    <source>
        <strain>Berkeley</strain>
    </source>
</reference>
<reference key="4">
    <citation type="journal article" date="1995" name="Mech. Dev.">
        <title>Dual organisation of the Drosophila neuropeptide receptor NKD gene promoter.</title>
        <authorList>
            <person name="Rosay P."/>
            <person name="Colas J.-F."/>
            <person name="Maroteaux L."/>
        </authorList>
    </citation>
    <scope>NUCLEOTIDE SEQUENCE [GENOMIC DNA] OF 1-60</scope>
</reference>
<comment type="function">
    <text evidence="4">Receptor for tachykinin-like peptides.</text>
</comment>
<comment type="subcellular location">
    <subcellularLocation>
        <location evidence="4">Cell membrane</location>
        <topology evidence="4">Multi-pass membrane protein</topology>
    </subcellularLocation>
</comment>
<comment type="tissue specificity">
    <text evidence="4">Expressed in central nervous system, as well as in subsets of neurons in each segment of the developing ventral ganglia.</text>
</comment>
<comment type="developmental stage">
    <text evidence="4">Expressed throughout development and in the adult.</text>
</comment>
<comment type="similarity">
    <text evidence="2">Belongs to the G-protein coupled receptor 1 family.</text>
</comment>
<sequence>MSEIVDTELLVNCTILAVRRFELNSIVNTTLLGSLNRTEVVSLLSSIIDNRDNLESINEAKDFLTECLFPSPTRPYELPWEQKTIWAIIFGLMMFVAIAGNGIVLWIVTGHRSMRTVTNYFLLNLSIADLLMSSLNCVFNFIFMLNSDWPFGSIYCTINNFVANVTVSTSVFTLVAISFDRYIAIVHPLKRRTSRRKVRIILVLIWALSCVLSAPCLLYSSIMTKHYYNGKSRTVCFMMWPDGRYPTSMADYAYNLIILVLTYGIPMIVMLICYSLMGRVLWGSRSIGENTDRQMESMKSKRKVVRMFIAIVSIFAICWLPYHLFFIYAYHNNQVASTKYVQHMYLGFYWLAMSNAMVNPLIYYWMNKRFRMYFQRIICCCCVGLTRHRFDSPKSRLTNKNSSNRHTRAETKSQWKRSTMETQIQQAPVTSSCREQRSAQQQQPPGSGTNRAAVECIMERPADGSSSPLCLSINNSIGERQRVKIKYISCDEDNNPVELSPKQM</sequence>
<gene>
    <name type="primary">TkR86C</name>
    <name type="synonym">NKD</name>
    <name type="synonym">Takr86C</name>
    <name type="ORF">CG6515</name>
</gene>
<keyword id="KW-1003">Cell membrane</keyword>
<keyword id="KW-0297">G-protein coupled receptor</keyword>
<keyword id="KW-0325">Glycoprotein</keyword>
<keyword id="KW-0472">Membrane</keyword>
<keyword id="KW-0675">Receptor</keyword>
<keyword id="KW-1185">Reference proteome</keyword>
<keyword id="KW-0807">Transducer</keyword>
<keyword id="KW-0812">Transmembrane</keyword>
<keyword id="KW-1133">Transmembrane helix</keyword>
<feature type="chain" id="PRO_0000070184" description="Tachykinin-like peptides receptor 86C">
    <location>
        <begin position="1"/>
        <end position="504"/>
    </location>
</feature>
<feature type="topological domain" description="Extracellular" evidence="1">
    <location>
        <begin position="1"/>
        <end position="84"/>
    </location>
</feature>
<feature type="transmembrane region" description="Helical; Name=1" evidence="1">
    <location>
        <begin position="85"/>
        <end position="108"/>
    </location>
</feature>
<feature type="topological domain" description="Cytoplasmic" evidence="1">
    <location>
        <begin position="109"/>
        <end position="118"/>
    </location>
</feature>
<feature type="transmembrane region" description="Helical; Name=2" evidence="1">
    <location>
        <begin position="119"/>
        <end position="143"/>
    </location>
</feature>
<feature type="topological domain" description="Extracellular" evidence="1">
    <location>
        <begin position="144"/>
        <end position="155"/>
    </location>
</feature>
<feature type="transmembrane region" description="Helical; Name=3" evidence="1">
    <location>
        <begin position="156"/>
        <end position="179"/>
    </location>
</feature>
<feature type="topological domain" description="Cytoplasmic" evidence="1">
    <location>
        <begin position="180"/>
        <end position="199"/>
    </location>
</feature>
<feature type="transmembrane region" description="Helical; Name=4" evidence="1">
    <location>
        <begin position="200"/>
        <end position="224"/>
    </location>
</feature>
<feature type="topological domain" description="Extracellular" evidence="1">
    <location>
        <begin position="225"/>
        <end position="250"/>
    </location>
</feature>
<feature type="transmembrane region" description="Helical; Name=5" evidence="1">
    <location>
        <begin position="251"/>
        <end position="275"/>
    </location>
</feature>
<feature type="topological domain" description="Cytoplasmic" evidence="1">
    <location>
        <begin position="276"/>
        <end position="308"/>
    </location>
</feature>
<feature type="transmembrane region" description="Helical; Name=6" evidence="1">
    <location>
        <begin position="309"/>
        <end position="330"/>
    </location>
</feature>
<feature type="topological domain" description="Extracellular" evidence="1">
    <location>
        <begin position="331"/>
        <end position="343"/>
    </location>
</feature>
<feature type="transmembrane region" description="Helical; Name=7" evidence="1">
    <location>
        <begin position="344"/>
        <end position="367"/>
    </location>
</feature>
<feature type="topological domain" description="Cytoplasmic" evidence="1">
    <location>
        <begin position="368"/>
        <end position="504"/>
    </location>
</feature>
<feature type="region of interest" description="Disordered" evidence="3">
    <location>
        <begin position="393"/>
        <end position="450"/>
    </location>
</feature>
<feature type="compositionally biased region" description="Polar residues" evidence="3">
    <location>
        <begin position="395"/>
        <end position="404"/>
    </location>
</feature>
<feature type="compositionally biased region" description="Polar residues" evidence="3">
    <location>
        <begin position="416"/>
        <end position="450"/>
    </location>
</feature>
<feature type="glycosylation site" description="N-linked (GlcNAc...) asparagine" evidence="1">
    <location>
        <position position="12"/>
    </location>
</feature>
<feature type="glycosylation site" description="N-linked (GlcNAc...) asparagine" evidence="1">
    <location>
        <position position="28"/>
    </location>
</feature>
<feature type="glycosylation site" description="N-linked (GlcNAc...) asparagine" evidence="1">
    <location>
        <position position="36"/>
    </location>
</feature>
<feature type="sequence conflict" description="In Ref. 1; AAA28722." evidence="5" ref="1">
    <original>H</original>
    <variation>D</variation>
    <location>
        <position position="187"/>
    </location>
</feature>
<feature type="sequence conflict" description="In Ref. 1; AAA28722." evidence="5" ref="1">
    <original>H</original>
    <variation>Q</variation>
    <location>
        <position position="226"/>
    </location>
</feature>
<feature type="sequence conflict" description="In Ref. 1; AAA28722." evidence="5" ref="1">
    <original>Y</original>
    <variation>T</variation>
    <location>
        <position position="263"/>
    </location>
</feature>
<feature type="sequence conflict" description="In Ref. 1; AAA28722." evidence="5" ref="1">
    <original>LW</original>
    <variation>PG</variation>
    <location>
        <begin position="281"/>
        <end position="282"/>
    </location>
</feature>
<protein>
    <recommendedName>
        <fullName>Tachykinin-like peptides receptor 86C</fullName>
        <shortName>NKD</shortName>
    </recommendedName>
</protein>
<name>TLR1_DROME</name>
<evidence type="ECO:0000255" key="1"/>
<evidence type="ECO:0000255" key="2">
    <source>
        <dbReference type="PROSITE-ProRule" id="PRU00521"/>
    </source>
</evidence>
<evidence type="ECO:0000256" key="3">
    <source>
        <dbReference type="SAM" id="MobiDB-lite"/>
    </source>
</evidence>
<evidence type="ECO:0000269" key="4">
    <source>
    </source>
</evidence>
<evidence type="ECO:0000305" key="5"/>
<organism>
    <name type="scientific">Drosophila melanogaster</name>
    <name type="common">Fruit fly</name>
    <dbReference type="NCBI Taxonomy" id="7227"/>
    <lineage>
        <taxon>Eukaryota</taxon>
        <taxon>Metazoa</taxon>
        <taxon>Ecdysozoa</taxon>
        <taxon>Arthropoda</taxon>
        <taxon>Hexapoda</taxon>
        <taxon>Insecta</taxon>
        <taxon>Pterygota</taxon>
        <taxon>Neoptera</taxon>
        <taxon>Endopterygota</taxon>
        <taxon>Diptera</taxon>
        <taxon>Brachycera</taxon>
        <taxon>Muscomorpha</taxon>
        <taxon>Ephydroidea</taxon>
        <taxon>Drosophilidae</taxon>
        <taxon>Drosophila</taxon>
        <taxon>Sophophora</taxon>
    </lineage>
</organism>
<dbReference type="EMBL" id="M77168">
    <property type="protein sequence ID" value="AAA28722.1"/>
    <property type="molecule type" value="mRNA"/>
</dbReference>
<dbReference type="EMBL" id="AE014297">
    <property type="protein sequence ID" value="AAF54544.1"/>
    <property type="molecule type" value="Genomic_DNA"/>
</dbReference>
<dbReference type="EMBL" id="S80427">
    <property type="protein sequence ID" value="AAB35334.2"/>
    <property type="molecule type" value="Genomic_DNA"/>
</dbReference>
<dbReference type="PIR" id="A41783">
    <property type="entry name" value="A41783"/>
</dbReference>
<dbReference type="RefSeq" id="NP_524304.2">
    <property type="nucleotide sequence ID" value="NM_079580.3"/>
</dbReference>
<dbReference type="SMR" id="P30974"/>
<dbReference type="BioGRID" id="66430">
    <property type="interactions" value="1"/>
</dbReference>
<dbReference type="FunCoup" id="P30974">
    <property type="interactions" value="78"/>
</dbReference>
<dbReference type="IntAct" id="P30974">
    <property type="interactions" value="1"/>
</dbReference>
<dbReference type="STRING" id="7227.FBpp0111701"/>
<dbReference type="GlyCosmos" id="P30974">
    <property type="glycosylation" value="3 sites, No reported glycans"/>
</dbReference>
<dbReference type="GlyGen" id="P30974">
    <property type="glycosylation" value="3 sites"/>
</dbReference>
<dbReference type="PaxDb" id="7227-FBpp0111701"/>
<dbReference type="DNASU" id="41286"/>
<dbReference type="EnsemblMetazoa" id="FBtr0082315">
    <property type="protein sequence ID" value="FBpp0081791"/>
    <property type="gene ID" value="FBgn0004841"/>
</dbReference>
<dbReference type="GeneID" id="41286"/>
<dbReference type="KEGG" id="dme:Dmel_CG6515"/>
<dbReference type="AGR" id="FB:FBgn0004841"/>
<dbReference type="CTD" id="41286"/>
<dbReference type="FlyBase" id="FBgn0004841">
    <property type="gene designation" value="TkR86C"/>
</dbReference>
<dbReference type="VEuPathDB" id="VectorBase:FBgn0004841"/>
<dbReference type="eggNOG" id="KOG4219">
    <property type="taxonomic scope" value="Eukaryota"/>
</dbReference>
<dbReference type="GeneTree" id="ENSGT00940000155512"/>
<dbReference type="HOGENOM" id="CLU_009579_6_1_1"/>
<dbReference type="InParanoid" id="P30974"/>
<dbReference type="OrthoDB" id="5981855at2759"/>
<dbReference type="PhylomeDB" id="P30974"/>
<dbReference type="SignaLink" id="P30974"/>
<dbReference type="BioGRID-ORCS" id="41286">
    <property type="hits" value="0 hits in 3 CRISPR screens"/>
</dbReference>
<dbReference type="GenomeRNAi" id="41286"/>
<dbReference type="PRO" id="PR:P30974"/>
<dbReference type="Proteomes" id="UP000000803">
    <property type="component" value="Chromosome 3R"/>
</dbReference>
<dbReference type="Bgee" id="FBgn0004841">
    <property type="expression patterns" value="Expressed in antennal olfactory receptor neuron of coeloconic sensillum in antenna and 26 other cell types or tissues"/>
</dbReference>
<dbReference type="ExpressionAtlas" id="P30974">
    <property type="expression patterns" value="baseline and differential"/>
</dbReference>
<dbReference type="GO" id="GO:0016020">
    <property type="term" value="C:membrane"/>
    <property type="evidence" value="ECO:0000250"/>
    <property type="project" value="FlyBase"/>
</dbReference>
<dbReference type="GO" id="GO:0005886">
    <property type="term" value="C:plasma membrane"/>
    <property type="evidence" value="ECO:0000314"/>
    <property type="project" value="FlyBase"/>
</dbReference>
<dbReference type="GO" id="GO:0008188">
    <property type="term" value="F:neuropeptide receptor activity"/>
    <property type="evidence" value="ECO:0000314"/>
    <property type="project" value="FlyBase"/>
</dbReference>
<dbReference type="GO" id="GO:0004995">
    <property type="term" value="F:tachykinin receptor activity"/>
    <property type="evidence" value="ECO:0000314"/>
    <property type="project" value="FlyBase"/>
</dbReference>
<dbReference type="GO" id="GO:0007186">
    <property type="term" value="P:G protein-coupled receptor signaling pathway"/>
    <property type="evidence" value="ECO:0000255"/>
    <property type="project" value="FlyBase"/>
</dbReference>
<dbReference type="GO" id="GO:0002121">
    <property type="term" value="P:inter-male aggressive behavior"/>
    <property type="evidence" value="ECO:0000316"/>
    <property type="project" value="FlyBase"/>
</dbReference>
<dbReference type="GO" id="GO:0007218">
    <property type="term" value="P:neuropeptide signaling pathway"/>
    <property type="evidence" value="ECO:0000314"/>
    <property type="project" value="FlyBase"/>
</dbReference>
<dbReference type="GO" id="GO:0007217">
    <property type="term" value="P:tachykinin receptor signaling pathway"/>
    <property type="evidence" value="ECO:0000314"/>
    <property type="project" value="FlyBase"/>
</dbReference>
<dbReference type="CDD" id="cd15390">
    <property type="entry name" value="7tmA_TACR"/>
    <property type="match status" value="1"/>
</dbReference>
<dbReference type="FunFam" id="1.20.1070.10:FF:000328">
    <property type="entry name" value="Tachykinin-like peptides receptor 86C"/>
    <property type="match status" value="1"/>
</dbReference>
<dbReference type="Gene3D" id="1.20.1070.10">
    <property type="entry name" value="Rhodopsin 7-helix transmembrane proteins"/>
    <property type="match status" value="1"/>
</dbReference>
<dbReference type="InterPro" id="IPR000276">
    <property type="entry name" value="GPCR_Rhodpsn"/>
</dbReference>
<dbReference type="InterPro" id="IPR017452">
    <property type="entry name" value="GPCR_Rhodpsn_7TM"/>
</dbReference>
<dbReference type="InterPro" id="IPR001681">
    <property type="entry name" value="Neurokn_rcpt"/>
</dbReference>
<dbReference type="PANTHER" id="PTHR46925">
    <property type="entry name" value="G-PROTEIN COUPLED RECEPTOR TKR-1-RELATED"/>
    <property type="match status" value="1"/>
</dbReference>
<dbReference type="PANTHER" id="PTHR46925:SF2">
    <property type="entry name" value="G-PROTEIN COUPLED RECEPTOR TKR-1-RELATED"/>
    <property type="match status" value="1"/>
</dbReference>
<dbReference type="Pfam" id="PF00001">
    <property type="entry name" value="7tm_1"/>
    <property type="match status" value="1"/>
</dbReference>
<dbReference type="PRINTS" id="PR00237">
    <property type="entry name" value="GPCRRHODOPSN"/>
</dbReference>
<dbReference type="PRINTS" id="PR00244">
    <property type="entry name" value="NEUROKININR"/>
</dbReference>
<dbReference type="SMART" id="SM01381">
    <property type="entry name" value="7TM_GPCR_Srsx"/>
    <property type="match status" value="1"/>
</dbReference>
<dbReference type="SUPFAM" id="SSF81321">
    <property type="entry name" value="Family A G protein-coupled receptor-like"/>
    <property type="match status" value="1"/>
</dbReference>
<dbReference type="PROSITE" id="PS00237">
    <property type="entry name" value="G_PROTEIN_RECEP_F1_1"/>
    <property type="match status" value="1"/>
</dbReference>
<dbReference type="PROSITE" id="PS50262">
    <property type="entry name" value="G_PROTEIN_RECEP_F1_2"/>
    <property type="match status" value="1"/>
</dbReference>
<proteinExistence type="evidence at transcript level"/>
<accession>P30974</accession>
<accession>Q9VGX8</accession>